<sequence length="341" mass="38581">MLSDRQQMILNAIVDNYIHSAEPVGSRTISKRDDIGFSSATIRNEMSDLEELGYLEQPHTSAGRVPSTKGYRFYVDNLIQPHLLEETELGKLKQLFAERILHAEQVVEYTAQILSQLTNYTAIVLGPEIFEHRLKHIQIVPLNAEQAVAIVVTHTGRVENKLIDLPEGIGAGEIEKLVNLLNAKLTDVPLWQLRQRLYQEISGEMQRHTEQYEEILQLLNNSLTQEEERVYLRGATKIMNQPEFRDVDKVKDILELLEQHDQLMNVIGMQGDGLTVRIGQENQLDAIKQCSIITTSYSLGGKPVGMVGILGPTRMEYGKVITVLNHLAEGLSRMLTSQFEK</sequence>
<feature type="chain" id="PRO_1000118292" description="Heat-inducible transcription repressor HrcA">
    <location>
        <begin position="1"/>
        <end position="341"/>
    </location>
</feature>
<accession>C0ZB46</accession>
<keyword id="KW-1185">Reference proteome</keyword>
<keyword id="KW-0678">Repressor</keyword>
<keyword id="KW-0346">Stress response</keyword>
<keyword id="KW-0804">Transcription</keyword>
<keyword id="KW-0805">Transcription regulation</keyword>
<organism>
    <name type="scientific">Brevibacillus brevis (strain 47 / JCM 6285 / NBRC 100599)</name>
    <dbReference type="NCBI Taxonomy" id="358681"/>
    <lineage>
        <taxon>Bacteria</taxon>
        <taxon>Bacillati</taxon>
        <taxon>Bacillota</taxon>
        <taxon>Bacilli</taxon>
        <taxon>Bacillales</taxon>
        <taxon>Paenibacillaceae</taxon>
        <taxon>Brevibacillus</taxon>
    </lineage>
</organism>
<name>HRCA_BREBN</name>
<proteinExistence type="inferred from homology"/>
<protein>
    <recommendedName>
        <fullName evidence="1">Heat-inducible transcription repressor HrcA</fullName>
    </recommendedName>
</protein>
<gene>
    <name evidence="1" type="primary">hrcA</name>
    <name type="ordered locus">BBR47_20280</name>
</gene>
<evidence type="ECO:0000255" key="1">
    <source>
        <dbReference type="HAMAP-Rule" id="MF_00081"/>
    </source>
</evidence>
<reference key="1">
    <citation type="submission" date="2005-03" db="EMBL/GenBank/DDBJ databases">
        <title>Brevibacillus brevis strain 47, complete genome.</title>
        <authorList>
            <person name="Hosoyama A."/>
            <person name="Yamada R."/>
            <person name="Hongo Y."/>
            <person name="Terui Y."/>
            <person name="Ankai A."/>
            <person name="Masuyama W."/>
            <person name="Sekiguchi M."/>
            <person name="Takeda T."/>
            <person name="Asano K."/>
            <person name="Ohji S."/>
            <person name="Ichikawa N."/>
            <person name="Narita S."/>
            <person name="Aoki N."/>
            <person name="Miura H."/>
            <person name="Matsushita S."/>
            <person name="Sekigawa T."/>
            <person name="Yamagata H."/>
            <person name="Yoshikawa H."/>
            <person name="Udaka S."/>
            <person name="Tanikawa S."/>
            <person name="Fujita N."/>
        </authorList>
    </citation>
    <scope>NUCLEOTIDE SEQUENCE [LARGE SCALE GENOMIC DNA]</scope>
    <source>
        <strain>47 / JCM 6285 / NBRC 100599</strain>
    </source>
</reference>
<comment type="function">
    <text evidence="1">Negative regulator of class I heat shock genes (grpE-dnaK-dnaJ and groELS operons). Prevents heat-shock induction of these operons.</text>
</comment>
<comment type="similarity">
    <text evidence="1">Belongs to the HrcA family.</text>
</comment>
<dbReference type="EMBL" id="AP008955">
    <property type="protein sequence ID" value="BAH43005.1"/>
    <property type="molecule type" value="Genomic_DNA"/>
</dbReference>
<dbReference type="RefSeq" id="WP_012685738.1">
    <property type="nucleotide sequence ID" value="NC_012491.1"/>
</dbReference>
<dbReference type="SMR" id="C0ZB46"/>
<dbReference type="STRING" id="358681.BBR47_20280"/>
<dbReference type="KEGG" id="bbe:BBR47_20280"/>
<dbReference type="eggNOG" id="COG1420">
    <property type="taxonomic scope" value="Bacteria"/>
</dbReference>
<dbReference type="HOGENOM" id="CLU_050019_1_0_9"/>
<dbReference type="Proteomes" id="UP000001877">
    <property type="component" value="Chromosome"/>
</dbReference>
<dbReference type="GO" id="GO:0003677">
    <property type="term" value="F:DNA binding"/>
    <property type="evidence" value="ECO:0007669"/>
    <property type="project" value="InterPro"/>
</dbReference>
<dbReference type="GO" id="GO:0045892">
    <property type="term" value="P:negative regulation of DNA-templated transcription"/>
    <property type="evidence" value="ECO:0007669"/>
    <property type="project" value="UniProtKB-UniRule"/>
</dbReference>
<dbReference type="FunFam" id="1.10.10.10:FF:000049">
    <property type="entry name" value="Heat-inducible transcription repressor HrcA"/>
    <property type="match status" value="1"/>
</dbReference>
<dbReference type="Gene3D" id="3.30.450.40">
    <property type="match status" value="1"/>
</dbReference>
<dbReference type="Gene3D" id="3.30.390.60">
    <property type="entry name" value="Heat-inducible transcription repressor hrca homolog, domain 3"/>
    <property type="match status" value="1"/>
</dbReference>
<dbReference type="Gene3D" id="1.10.10.10">
    <property type="entry name" value="Winged helix-like DNA-binding domain superfamily/Winged helix DNA-binding domain"/>
    <property type="match status" value="1"/>
</dbReference>
<dbReference type="HAMAP" id="MF_00081">
    <property type="entry name" value="HrcA"/>
    <property type="match status" value="1"/>
</dbReference>
<dbReference type="InterPro" id="IPR029016">
    <property type="entry name" value="GAF-like_dom_sf"/>
</dbReference>
<dbReference type="InterPro" id="IPR002571">
    <property type="entry name" value="HrcA"/>
</dbReference>
<dbReference type="InterPro" id="IPR021153">
    <property type="entry name" value="HrcA_C"/>
</dbReference>
<dbReference type="InterPro" id="IPR036388">
    <property type="entry name" value="WH-like_DNA-bd_sf"/>
</dbReference>
<dbReference type="InterPro" id="IPR036390">
    <property type="entry name" value="WH_DNA-bd_sf"/>
</dbReference>
<dbReference type="InterPro" id="IPR005104">
    <property type="entry name" value="WHTH_HrcA_DNA-bd"/>
</dbReference>
<dbReference type="InterPro" id="IPR023120">
    <property type="entry name" value="WHTH_transcript_rep_HrcA_IDD"/>
</dbReference>
<dbReference type="NCBIfam" id="TIGR00331">
    <property type="entry name" value="hrcA"/>
    <property type="match status" value="1"/>
</dbReference>
<dbReference type="PANTHER" id="PTHR34824">
    <property type="entry name" value="HEAT-INDUCIBLE TRANSCRIPTION REPRESSOR HRCA"/>
    <property type="match status" value="1"/>
</dbReference>
<dbReference type="PANTHER" id="PTHR34824:SF1">
    <property type="entry name" value="HEAT-INDUCIBLE TRANSCRIPTION REPRESSOR HRCA"/>
    <property type="match status" value="1"/>
</dbReference>
<dbReference type="Pfam" id="PF01628">
    <property type="entry name" value="HrcA"/>
    <property type="match status" value="1"/>
</dbReference>
<dbReference type="Pfam" id="PF03444">
    <property type="entry name" value="HrcA_DNA-bdg"/>
    <property type="match status" value="1"/>
</dbReference>
<dbReference type="PIRSF" id="PIRSF005485">
    <property type="entry name" value="HrcA"/>
    <property type="match status" value="1"/>
</dbReference>
<dbReference type="SUPFAM" id="SSF55781">
    <property type="entry name" value="GAF domain-like"/>
    <property type="match status" value="1"/>
</dbReference>
<dbReference type="SUPFAM" id="SSF46785">
    <property type="entry name" value="Winged helix' DNA-binding domain"/>
    <property type="match status" value="1"/>
</dbReference>